<accession>Q9Z1N4</accession>
<name>BPNT1_RAT</name>
<keyword id="KW-0002">3D-structure</keyword>
<keyword id="KW-0007">Acetylation</keyword>
<keyword id="KW-0903">Direct protein sequencing</keyword>
<keyword id="KW-0378">Hydrolase</keyword>
<keyword id="KW-0452">Lithium</keyword>
<keyword id="KW-0460">Magnesium</keyword>
<keyword id="KW-0479">Metal-binding</keyword>
<keyword id="KW-0597">Phosphoprotein</keyword>
<keyword id="KW-1185">Reference proteome</keyword>
<protein>
    <recommendedName>
        <fullName evidence="6">3'(2'),5'-bisphosphate nucleotidase 1</fullName>
        <ecNumber evidence="3">3.1.3.7</ecNumber>
    </recommendedName>
    <alternativeName>
        <fullName evidence="6">3'-phosphoadenosine 5'-phosphate phosphatase</fullName>
        <shortName evidence="6">PAP phosphatase</shortName>
    </alternativeName>
    <alternativeName>
        <fullName>Bisphosphate 3'-nucleotidase 1</fullName>
        <shortName>BPntase 1</shortName>
    </alternativeName>
    <alternativeName>
        <fullName evidence="6">Inositol-polyphosphate 1-phosphatase</fullName>
        <ecNumber evidence="3">3.1.3.57</ecNumber>
    </alternativeName>
    <alternativeName>
        <fullName evidence="6 7">RnPIP</fullName>
    </alternativeName>
    <alternativeName>
        <fullName>scHAL2 analogous 3</fullName>
    </alternativeName>
</protein>
<sequence>MASSHNVLMRLVASAYSIAQKAGTIVRCVIAEGDLGIVQKTSATDLQTKADRMVQMSICSSLSRKFPKLTIIGEEDLPPGEVDQELIEDGQSEEILKQPCPSQYSAIKEEDLVVWVDPVDGTKEYTEGLLDNVTVLIGIAYEGKAIAGIINQPYYNYQAGPDAVLGRTIWGVLGLGAFGFQLKEAPAGKHIITTTRSHSNKLVTDCIAAMNPDNVLRVGGAGNKIIQLIEGKASAYVFASPGCKKWDTCAPEVILHAVGGKLTDIHGNPLQYDKEVKHMNSAGVLAALRNYEYYASRVPESVKSALIP</sequence>
<dbReference type="EC" id="3.1.3.7" evidence="3"/>
<dbReference type="EC" id="3.1.3.57" evidence="3"/>
<dbReference type="EMBL" id="AJ000347">
    <property type="protein sequence ID" value="CAA04022.1"/>
    <property type="molecule type" value="mRNA"/>
</dbReference>
<dbReference type="EMBL" id="BC085692">
    <property type="protein sequence ID" value="AAH85692.1"/>
    <property type="molecule type" value="mRNA"/>
</dbReference>
<dbReference type="RefSeq" id="NP_741987.1">
    <property type="nucleotide sequence ID" value="NM_171990.2"/>
</dbReference>
<dbReference type="RefSeq" id="XP_006250493.1">
    <property type="nucleotide sequence ID" value="XM_006250431.5"/>
</dbReference>
<dbReference type="PDB" id="1JP4">
    <property type="method" value="X-ray"/>
    <property type="resolution" value="1.69 A"/>
    <property type="chains" value="A=1-308"/>
</dbReference>
<dbReference type="PDBsum" id="1JP4"/>
<dbReference type="SMR" id="Q9Z1N4"/>
<dbReference type="FunCoup" id="Q9Z1N4">
    <property type="interactions" value="1813"/>
</dbReference>
<dbReference type="STRING" id="10116.ENSRNOP00000071594"/>
<dbReference type="iPTMnet" id="Q9Z1N4"/>
<dbReference type="PhosphoSitePlus" id="Q9Z1N4"/>
<dbReference type="SwissPalm" id="Q9Z1N4"/>
<dbReference type="jPOST" id="Q9Z1N4"/>
<dbReference type="PaxDb" id="10116-ENSRNOP00000003249"/>
<dbReference type="GeneID" id="64473"/>
<dbReference type="KEGG" id="rno:64473"/>
<dbReference type="UCSC" id="RGD:621833">
    <property type="organism name" value="rat"/>
</dbReference>
<dbReference type="AGR" id="RGD:621833"/>
<dbReference type="CTD" id="10380"/>
<dbReference type="RGD" id="621833">
    <property type="gene designation" value="Bpnt1"/>
</dbReference>
<dbReference type="VEuPathDB" id="HostDB:ENSRNOG00000002378"/>
<dbReference type="eggNOG" id="KOG3099">
    <property type="taxonomic scope" value="Eukaryota"/>
</dbReference>
<dbReference type="HOGENOM" id="CLU_034742_2_0_1"/>
<dbReference type="InParanoid" id="Q9Z1N4"/>
<dbReference type="OrthoDB" id="411145at2759"/>
<dbReference type="PhylomeDB" id="Q9Z1N4"/>
<dbReference type="BRENDA" id="3.1.3.57">
    <property type="organism ID" value="5301"/>
</dbReference>
<dbReference type="Reactome" id="R-RNO-156584">
    <property type="pathway name" value="Cytosolic sulfonation of small molecules"/>
</dbReference>
<dbReference type="SABIO-RK" id="Q9Z1N4"/>
<dbReference type="EvolutionaryTrace" id="Q9Z1N4"/>
<dbReference type="PRO" id="PR:Q9Z1N4"/>
<dbReference type="Proteomes" id="UP000002494">
    <property type="component" value="Chromosome 13"/>
</dbReference>
<dbReference type="Bgee" id="ENSRNOG00000002378">
    <property type="expression patterns" value="Expressed in duodenum and 20 other cell types or tissues"/>
</dbReference>
<dbReference type="ExpressionAtlas" id="Q9Z1N4">
    <property type="expression patterns" value="baseline and differential"/>
</dbReference>
<dbReference type="GO" id="GO:0008441">
    <property type="term" value="F:3'(2'),5'-bisphosphate nucleotidase activity"/>
    <property type="evidence" value="ECO:0000314"/>
    <property type="project" value="RGD"/>
</dbReference>
<dbReference type="GO" id="GO:0004441">
    <property type="term" value="F:inositol-1,4-bisphosphate 1-phosphatase activity"/>
    <property type="evidence" value="ECO:0000314"/>
    <property type="project" value="RGD"/>
</dbReference>
<dbReference type="GO" id="GO:0000287">
    <property type="term" value="F:magnesium ion binding"/>
    <property type="evidence" value="ECO:0000314"/>
    <property type="project" value="RGD"/>
</dbReference>
<dbReference type="GO" id="GO:0046854">
    <property type="term" value="P:phosphatidylinositol phosphate biosynthetic process"/>
    <property type="evidence" value="ECO:0007669"/>
    <property type="project" value="InterPro"/>
</dbReference>
<dbReference type="CDD" id="cd01640">
    <property type="entry name" value="IPPase"/>
    <property type="match status" value="1"/>
</dbReference>
<dbReference type="FunFam" id="3.30.540.10:FF:000011">
    <property type="entry name" value="Bisphosphate nucleotidase 1"/>
    <property type="match status" value="1"/>
</dbReference>
<dbReference type="FunFam" id="3.40.190.80:FF:000006">
    <property type="entry name" value="Bisphosphate nucleotidase 1"/>
    <property type="match status" value="1"/>
</dbReference>
<dbReference type="Gene3D" id="3.40.190.80">
    <property type="match status" value="1"/>
</dbReference>
<dbReference type="Gene3D" id="3.30.540.10">
    <property type="entry name" value="Fructose-1,6-Bisphosphatase, subunit A, domain 1"/>
    <property type="match status" value="1"/>
</dbReference>
<dbReference type="InterPro" id="IPR050725">
    <property type="entry name" value="CysQ/Inositol_MonoPase"/>
</dbReference>
<dbReference type="InterPro" id="IPR020583">
    <property type="entry name" value="Inositol_monoP_metal-BS"/>
</dbReference>
<dbReference type="InterPro" id="IPR000760">
    <property type="entry name" value="Inositol_monophosphatase-like"/>
</dbReference>
<dbReference type="InterPro" id="IPR020550">
    <property type="entry name" value="Inositol_monophosphatase_CS"/>
</dbReference>
<dbReference type="PANTHER" id="PTHR43028">
    <property type="entry name" value="3'(2'),5'-BISPHOSPHATE NUCLEOTIDASE 1"/>
    <property type="match status" value="1"/>
</dbReference>
<dbReference type="PANTHER" id="PTHR43028:SF5">
    <property type="entry name" value="3'(2'),5'-BISPHOSPHATE NUCLEOTIDASE 1"/>
    <property type="match status" value="1"/>
</dbReference>
<dbReference type="Pfam" id="PF00459">
    <property type="entry name" value="Inositol_P"/>
    <property type="match status" value="1"/>
</dbReference>
<dbReference type="PRINTS" id="PR00377">
    <property type="entry name" value="IMPHPHTASES"/>
</dbReference>
<dbReference type="SUPFAM" id="SSF56655">
    <property type="entry name" value="Carbohydrate phosphatase"/>
    <property type="match status" value="1"/>
</dbReference>
<dbReference type="PROSITE" id="PS00629">
    <property type="entry name" value="IMP_1"/>
    <property type="match status" value="1"/>
</dbReference>
<dbReference type="PROSITE" id="PS00630">
    <property type="entry name" value="IMP_2"/>
    <property type="match status" value="1"/>
</dbReference>
<comment type="function">
    <text evidence="3">Phosphatase that converts 3'(2')-phosphoadenosine 5'-phosphate (PAP) to AMP and adenosine 3'-phosphate 5'-phosphosulfate (PAPS) to adenosine 5'-phosphosulfate (APS). Is also able to hydrolyze inositol 1,4-bisphosphate (Ins(1,4)P2) and inositol 1,3,4-trisphosphate (Ins(1,3,4)P3), but is not active on AMP, 3'-AMP, fructose-1,6-bisphosphate, Ins(1)P, Ins(2)P and Ins(1,4,5)P3. Probably prevents the toxic accumulation of PAP, a compound which inhibits a variety of proteins, including PAPS-utilizing enzymes such as sulfotransferases, and RNA processing enzymes. Could also play a role in inositol recycling and phosphoinositide metabolism.</text>
</comment>
<comment type="catalytic activity">
    <reaction evidence="3">
        <text>adenosine 3',5'-bisphosphate + H2O = AMP + phosphate</text>
        <dbReference type="Rhea" id="RHEA:10040"/>
        <dbReference type="ChEBI" id="CHEBI:15377"/>
        <dbReference type="ChEBI" id="CHEBI:43474"/>
        <dbReference type="ChEBI" id="CHEBI:58343"/>
        <dbReference type="ChEBI" id="CHEBI:456215"/>
        <dbReference type="EC" id="3.1.3.7"/>
    </reaction>
    <physiologicalReaction direction="left-to-right" evidence="9">
        <dbReference type="Rhea" id="RHEA:10041"/>
    </physiologicalReaction>
</comment>
<comment type="catalytic activity">
    <reaction evidence="3">
        <text>adenosine 2',5'-bisphosphate + H2O = AMP + phosphate</text>
        <dbReference type="Rhea" id="RHEA:77643"/>
        <dbReference type="ChEBI" id="CHEBI:15377"/>
        <dbReference type="ChEBI" id="CHEBI:43474"/>
        <dbReference type="ChEBI" id="CHEBI:194156"/>
        <dbReference type="ChEBI" id="CHEBI:456215"/>
        <dbReference type="EC" id="3.1.3.7"/>
    </reaction>
    <physiologicalReaction direction="left-to-right" evidence="9">
        <dbReference type="Rhea" id="RHEA:77644"/>
    </physiologicalReaction>
</comment>
<comment type="catalytic activity">
    <reaction evidence="3">
        <text>3'-phosphoadenylyl sulfate + H2O = adenosine 5'-phosphosulfate + phosphate</text>
        <dbReference type="Rhea" id="RHEA:77639"/>
        <dbReference type="ChEBI" id="CHEBI:15377"/>
        <dbReference type="ChEBI" id="CHEBI:43474"/>
        <dbReference type="ChEBI" id="CHEBI:58243"/>
        <dbReference type="ChEBI" id="CHEBI:58339"/>
        <dbReference type="EC" id="3.1.3.7"/>
    </reaction>
    <physiologicalReaction direction="left-to-right" evidence="9">
        <dbReference type="Rhea" id="RHEA:77640"/>
    </physiologicalReaction>
</comment>
<comment type="catalytic activity">
    <reaction evidence="3">
        <text>1D-myo-inositol 1,4-bisphosphate + H2O = 1D-myo-inositol 4-phosphate + phosphate</text>
        <dbReference type="Rhea" id="RHEA:15553"/>
        <dbReference type="ChEBI" id="CHEBI:15377"/>
        <dbReference type="ChEBI" id="CHEBI:43474"/>
        <dbReference type="ChEBI" id="CHEBI:58282"/>
        <dbReference type="ChEBI" id="CHEBI:58469"/>
        <dbReference type="EC" id="3.1.3.57"/>
    </reaction>
    <physiologicalReaction direction="left-to-right" evidence="9">
        <dbReference type="Rhea" id="RHEA:15554"/>
    </physiologicalReaction>
</comment>
<comment type="catalytic activity">
    <reaction evidence="3">
        <text>1D-myo-inositol 1,3,4-trisphosphate + H2O = 1D-myo-inositol 3,4-bisphosphate + phosphate</text>
        <dbReference type="Rhea" id="RHEA:70319"/>
        <dbReference type="ChEBI" id="CHEBI:15377"/>
        <dbReference type="ChEBI" id="CHEBI:43474"/>
        <dbReference type="ChEBI" id="CHEBI:58414"/>
        <dbReference type="ChEBI" id="CHEBI:83241"/>
    </reaction>
    <physiologicalReaction direction="left-to-right" evidence="9">
        <dbReference type="Rhea" id="RHEA:70320"/>
    </physiologicalReaction>
</comment>
<comment type="cofactor">
    <cofactor evidence="3">
        <name>Mg(2+)</name>
        <dbReference type="ChEBI" id="CHEBI:18420"/>
    </cofactor>
    <text evidence="4">Binds 3 Mg(2+) ions per subunit.</text>
</comment>
<comment type="activity regulation">
    <text evidence="3">Inhibited by Li(+) and Ca(2+), but not by Na(+).</text>
</comment>
<comment type="biophysicochemical properties">
    <kinetics>
        <KM evidence="3">1.2 uM for 3'-phosphoadenylyl sulfate</KM>
        <KM evidence="3">0.2 uM for 1D-myo-inositol 1,4-bisphosphate</KM>
        <Vmax evidence="3">0.8 umol/min/mg enzyme with adenosine 3',5'-bisphosphate as substrate</Vmax>
        <Vmax evidence="3">0.4 umol/min/mg enzyme with 3'-phosphoadenylyl sulfate as substrate</Vmax>
        <Vmax evidence="3">0.38 umol/min/mg enzyme with 1D-myo-inositol 1,4-bisphosphate as substrate</Vmax>
        <text evidence="3">KM for adenosine 3',5'-bisphosphate is below 2 uM.</text>
    </kinetics>
</comment>
<comment type="tissue specificity">
    <text evidence="3">Highly expressed in heart, brain, spleen, lung, liver, skeletal muscle, kidney and testis.</text>
</comment>
<comment type="similarity">
    <text evidence="8">Belongs to the inositol monophosphatase superfamily.</text>
</comment>
<proteinExistence type="evidence at protein level"/>
<feature type="initiator methionine" description="Removed" evidence="5">
    <location>
        <position position="1"/>
    </location>
</feature>
<feature type="chain" id="PRO_0000142529" description="3'(2'),5'-bisphosphate nucleotidase 1">
    <location>
        <begin position="2"/>
        <end position="308"/>
    </location>
</feature>
<feature type="active site" description="Proton acceptor" evidence="10">
    <location>
        <position position="51"/>
    </location>
</feature>
<feature type="active site" description="Proton acceptor" evidence="10">
    <location>
        <position position="122"/>
    </location>
</feature>
<feature type="binding site" evidence="4 11">
    <location>
        <position position="74"/>
    </location>
    <ligand>
        <name>Mg(2+)</name>
        <dbReference type="ChEBI" id="CHEBI:18420"/>
        <label>1</label>
    </ligand>
</feature>
<feature type="binding site" evidence="4 11">
    <location>
        <position position="74"/>
    </location>
    <ligand>
        <name>Mg(2+)</name>
        <dbReference type="ChEBI" id="CHEBI:18420"/>
        <label>3</label>
    </ligand>
</feature>
<feature type="binding site" evidence="4 11">
    <location>
        <position position="117"/>
    </location>
    <ligand>
        <name>Mg(2+)</name>
        <dbReference type="ChEBI" id="CHEBI:18420"/>
        <label>1</label>
    </ligand>
</feature>
<feature type="binding site" evidence="4 11">
    <location>
        <position position="117"/>
    </location>
    <ligand>
        <name>Mg(2+)</name>
        <dbReference type="ChEBI" id="CHEBI:18420"/>
        <label>2</label>
    </ligand>
</feature>
<feature type="binding site" evidence="4 11">
    <location>
        <position position="119"/>
    </location>
    <ligand>
        <name>Mg(2+)</name>
        <dbReference type="ChEBI" id="CHEBI:18420"/>
        <label>1</label>
    </ligand>
</feature>
<feature type="binding site" evidence="4 11">
    <location>
        <position position="120"/>
    </location>
    <ligand>
        <name>Mg(2+)</name>
        <dbReference type="ChEBI" id="CHEBI:18420"/>
        <label>2</label>
    </ligand>
</feature>
<feature type="binding site" evidence="4 11">
    <location>
        <position position="195"/>
    </location>
    <ligand>
        <name>AMP</name>
        <dbReference type="ChEBI" id="CHEBI:456215"/>
    </ligand>
</feature>
<feature type="binding site" evidence="4 11">
    <location>
        <position position="198"/>
    </location>
    <ligand>
        <name>AMP</name>
        <dbReference type="ChEBI" id="CHEBI:456215"/>
    </ligand>
</feature>
<feature type="binding site" evidence="4 11">
    <location>
        <position position="220"/>
    </location>
    <ligand>
        <name>AMP</name>
        <dbReference type="ChEBI" id="CHEBI:456215"/>
    </ligand>
</feature>
<feature type="binding site" evidence="4 11">
    <location>
        <position position="224"/>
    </location>
    <ligand>
        <name>AMP</name>
        <dbReference type="ChEBI" id="CHEBI:456215"/>
    </ligand>
</feature>
<feature type="binding site" evidence="4 11">
    <location>
        <position position="247"/>
    </location>
    <ligand>
        <name>Mg(2+)</name>
        <dbReference type="ChEBI" id="CHEBI:18420"/>
        <label>2</label>
    </ligand>
</feature>
<feature type="modified residue" description="N-acetylalanine" evidence="5">
    <location>
        <position position="2"/>
    </location>
</feature>
<feature type="modified residue" description="Phosphothreonine" evidence="1">
    <location>
        <position position="122"/>
    </location>
</feature>
<feature type="modified residue" description="Phosphoserine" evidence="1">
    <location>
        <position position="240"/>
    </location>
</feature>
<feature type="modified residue" description="N6-succinyllysine" evidence="2">
    <location>
        <position position="244"/>
    </location>
</feature>
<feature type="helix" evidence="12">
    <location>
        <begin position="7"/>
        <end position="32"/>
    </location>
</feature>
<feature type="strand" evidence="12">
    <location>
        <begin position="38"/>
        <end position="42"/>
    </location>
</feature>
<feature type="strand" evidence="12">
    <location>
        <begin position="45"/>
        <end position="47"/>
    </location>
</feature>
<feature type="helix" evidence="12">
    <location>
        <begin position="49"/>
        <end position="65"/>
    </location>
</feature>
<feature type="strand" evidence="12">
    <location>
        <begin position="69"/>
        <end position="75"/>
    </location>
</feature>
<feature type="helix" evidence="12">
    <location>
        <begin position="84"/>
        <end position="86"/>
    </location>
</feature>
<feature type="helix" evidence="12">
    <location>
        <begin position="93"/>
        <end position="96"/>
    </location>
</feature>
<feature type="helix" evidence="12">
    <location>
        <begin position="102"/>
        <end position="104"/>
    </location>
</feature>
<feature type="helix" evidence="12">
    <location>
        <begin position="109"/>
        <end position="111"/>
    </location>
</feature>
<feature type="strand" evidence="12">
    <location>
        <begin position="112"/>
        <end position="120"/>
    </location>
</feature>
<feature type="helix" evidence="12">
    <location>
        <begin position="122"/>
        <end position="126"/>
    </location>
</feature>
<feature type="helix" evidence="12">
    <location>
        <begin position="130"/>
        <end position="132"/>
    </location>
</feature>
<feature type="strand" evidence="12">
    <location>
        <begin position="134"/>
        <end position="141"/>
    </location>
</feature>
<feature type="strand" evidence="12">
    <location>
        <begin position="144"/>
        <end position="152"/>
    </location>
</feature>
<feature type="turn" evidence="12">
    <location>
        <begin position="153"/>
        <end position="158"/>
    </location>
</feature>
<feature type="strand" evidence="12">
    <location>
        <begin position="167"/>
        <end position="172"/>
    </location>
</feature>
<feature type="turn" evidence="12">
    <location>
        <begin position="173"/>
        <end position="175"/>
    </location>
</feature>
<feature type="strand" evidence="12">
    <location>
        <begin position="176"/>
        <end position="180"/>
    </location>
</feature>
<feature type="strand" evidence="12">
    <location>
        <begin position="191"/>
        <end position="198"/>
    </location>
</feature>
<feature type="helix" evidence="12">
    <location>
        <begin position="201"/>
        <end position="208"/>
    </location>
</feature>
<feature type="strand" evidence="12">
    <location>
        <begin position="213"/>
        <end position="219"/>
    </location>
</feature>
<feature type="helix" evidence="12">
    <location>
        <begin position="221"/>
        <end position="229"/>
    </location>
</feature>
<feature type="strand" evidence="12">
    <location>
        <begin position="234"/>
        <end position="238"/>
    </location>
</feature>
<feature type="helix" evidence="12">
    <location>
        <begin position="245"/>
        <end position="257"/>
    </location>
</feature>
<feature type="strand" evidence="12">
    <location>
        <begin position="261"/>
        <end position="263"/>
    </location>
</feature>
<feature type="strand" evidence="12">
    <location>
        <begin position="284"/>
        <end position="289"/>
    </location>
</feature>
<feature type="helix" evidence="12">
    <location>
        <begin position="291"/>
        <end position="297"/>
    </location>
</feature>
<feature type="helix" evidence="12">
    <location>
        <begin position="300"/>
        <end position="305"/>
    </location>
</feature>
<reference key="1">
    <citation type="journal article" date="1999" name="J. Biol. Chem.">
        <title>A novel mammalian lithium-sensitive enzyme with a dual enzymatic activity, 3'-phosphoadenosine 5'-phosphate phosphatase and inositol-polyphosphate 1-phosphatase.</title>
        <authorList>
            <person name="Lopez-Coronado J.M."/>
            <person name="Belles J.M."/>
            <person name="Lesage F."/>
            <person name="Serrano R."/>
            <person name="Rodriguez P.L."/>
        </authorList>
    </citation>
    <scope>NUCLEOTIDE SEQUENCE [MRNA]</scope>
    <scope>FUNCTION</scope>
    <scope>CATALYTIC ACTIVITY</scope>
    <scope>COFACTOR</scope>
    <scope>SUBSTRATE SPECIFICITY</scope>
    <scope>ACTIVITY REGULATION</scope>
    <scope>BIOPHYSICOCHEMICAL PROPERTIES</scope>
    <scope>TISSUE SPECIFICITY</scope>
    <source>
        <tissue>Heart</tissue>
    </source>
</reference>
<reference key="2">
    <citation type="journal article" date="2004" name="Genome Res.">
        <title>The status, quality, and expansion of the NIH full-length cDNA project: the Mammalian Gene Collection (MGC).</title>
        <authorList>
            <consortium name="The MGC Project Team"/>
        </authorList>
    </citation>
    <scope>NUCLEOTIDE SEQUENCE [LARGE SCALE MRNA]</scope>
    <source>
        <tissue>Heart</tissue>
    </source>
</reference>
<reference key="3">
    <citation type="submission" date="2007-04" db="UniProtKB">
        <authorList>
            <person name="Lubec G."/>
            <person name="Afjehi-Sadat L."/>
            <person name="Chen W.-Q."/>
        </authorList>
    </citation>
    <scope>PROTEIN SEQUENCE OF 28-40; 145-167; 202-217; 225-232; 262-274 AND 278-297</scope>
    <scope>IDENTIFICATION BY MASS SPECTROMETRY</scope>
    <source>
        <strain>Sprague-Dawley</strain>
        <tissue>Hippocampus</tissue>
        <tissue>Spinal cord</tissue>
    </source>
</reference>
<reference key="4">
    <citation type="submission" date="2007-02" db="UniProtKB">
        <authorList>
            <person name="Lubec G."/>
            <person name="Chen W.-Q."/>
        </authorList>
    </citation>
    <scope>ACETYLATION AT ALA-2</scope>
    <scope>IDENTIFICATION BY MASS SPECTROMETRY</scope>
</reference>
<reference key="5">
    <citation type="journal article" date="2002" name="J. Mol. Biol.">
        <title>Crystal structure of an enzyme displaying both inositol-polyphosphate-1-phosphatase and 3'-phosphoadenosine-5'-phosphate phosphatase activities: a novel target of lithium therapy.</title>
        <authorList>
            <person name="Patel S."/>
            <person name="Yenush L."/>
            <person name="Rodriguez P.L."/>
            <person name="Serrano R."/>
            <person name="Blundell T.L."/>
        </authorList>
    </citation>
    <scope>X-RAY CRYSTALLOGRAPHY (1.69 ANGSTROMS) OF 5-308 IN COMPLEX WITH AMP; MG(2+) AND PHOSPHATE</scope>
    <scope>REACTION MECHANISM</scope>
    <scope>ACTIVE SITE</scope>
</reference>
<gene>
    <name type="primary">Bpnt1</name>
    <name type="synonym">Sal3</name>
</gene>
<organism>
    <name type="scientific">Rattus norvegicus</name>
    <name type="common">Rat</name>
    <dbReference type="NCBI Taxonomy" id="10116"/>
    <lineage>
        <taxon>Eukaryota</taxon>
        <taxon>Metazoa</taxon>
        <taxon>Chordata</taxon>
        <taxon>Craniata</taxon>
        <taxon>Vertebrata</taxon>
        <taxon>Euteleostomi</taxon>
        <taxon>Mammalia</taxon>
        <taxon>Eutheria</taxon>
        <taxon>Euarchontoglires</taxon>
        <taxon>Glires</taxon>
        <taxon>Rodentia</taxon>
        <taxon>Myomorpha</taxon>
        <taxon>Muroidea</taxon>
        <taxon>Muridae</taxon>
        <taxon>Murinae</taxon>
        <taxon>Rattus</taxon>
    </lineage>
</organism>
<evidence type="ECO:0000250" key="1">
    <source>
        <dbReference type="UniProtKB" id="O95861"/>
    </source>
</evidence>
<evidence type="ECO:0000250" key="2">
    <source>
        <dbReference type="UniProtKB" id="Q9Z0S1"/>
    </source>
</evidence>
<evidence type="ECO:0000269" key="3">
    <source>
    </source>
</evidence>
<evidence type="ECO:0000269" key="4">
    <source>
    </source>
</evidence>
<evidence type="ECO:0000269" key="5">
    <source ref="4"/>
</evidence>
<evidence type="ECO:0000303" key="6">
    <source>
    </source>
</evidence>
<evidence type="ECO:0000303" key="7">
    <source>
    </source>
</evidence>
<evidence type="ECO:0000305" key="8"/>
<evidence type="ECO:0000305" key="9">
    <source>
    </source>
</evidence>
<evidence type="ECO:0000305" key="10">
    <source>
    </source>
</evidence>
<evidence type="ECO:0007744" key="11">
    <source>
        <dbReference type="PDB" id="1JP4"/>
    </source>
</evidence>
<evidence type="ECO:0007829" key="12">
    <source>
        <dbReference type="PDB" id="1JP4"/>
    </source>
</evidence>